<evidence type="ECO:0000255" key="1">
    <source>
        <dbReference type="HAMAP-Rule" id="MF_00003"/>
    </source>
</evidence>
<evidence type="ECO:0000256" key="2">
    <source>
        <dbReference type="SAM" id="MobiDB-lite"/>
    </source>
</evidence>
<keyword id="KW-0963">Cytoplasm</keyword>
<keyword id="KW-1185">Reference proteome</keyword>
<keyword id="KW-0690">Ribosome biogenesis</keyword>
<protein>
    <recommendedName>
        <fullName evidence="1">Ribosome-binding factor A</fullName>
    </recommendedName>
</protein>
<name>RBFA_KINRD</name>
<proteinExistence type="inferred from homology"/>
<comment type="function">
    <text evidence="1">One of several proteins that assist in the late maturation steps of the functional core of the 30S ribosomal subunit. Associates with free 30S ribosomal subunits (but not with 30S subunits that are part of 70S ribosomes or polysomes). Required for efficient processing of 16S rRNA. May interact with the 5'-terminal helix region of 16S rRNA.</text>
</comment>
<comment type="subunit">
    <text evidence="1">Monomer. Binds 30S ribosomal subunits, but not 50S ribosomal subunits or 70S ribosomes.</text>
</comment>
<comment type="subcellular location">
    <subcellularLocation>
        <location evidence="1">Cytoplasm</location>
    </subcellularLocation>
</comment>
<comment type="similarity">
    <text evidence="1">Belongs to the RbfA family.</text>
</comment>
<dbReference type="EMBL" id="CP000750">
    <property type="protein sequence ID" value="ABS02933.1"/>
    <property type="molecule type" value="Genomic_DNA"/>
</dbReference>
<dbReference type="RefSeq" id="WP_011981928.1">
    <property type="nucleotide sequence ID" value="NC_009664.2"/>
</dbReference>
<dbReference type="SMR" id="A6W7Z4"/>
<dbReference type="STRING" id="266940.Krad_1445"/>
<dbReference type="KEGG" id="kra:Krad_1445"/>
<dbReference type="eggNOG" id="COG0858">
    <property type="taxonomic scope" value="Bacteria"/>
</dbReference>
<dbReference type="HOGENOM" id="CLU_089475_0_0_11"/>
<dbReference type="OrthoDB" id="307788at2"/>
<dbReference type="Proteomes" id="UP000001116">
    <property type="component" value="Chromosome"/>
</dbReference>
<dbReference type="GO" id="GO:0005829">
    <property type="term" value="C:cytosol"/>
    <property type="evidence" value="ECO:0007669"/>
    <property type="project" value="TreeGrafter"/>
</dbReference>
<dbReference type="GO" id="GO:0043024">
    <property type="term" value="F:ribosomal small subunit binding"/>
    <property type="evidence" value="ECO:0007669"/>
    <property type="project" value="TreeGrafter"/>
</dbReference>
<dbReference type="GO" id="GO:0030490">
    <property type="term" value="P:maturation of SSU-rRNA"/>
    <property type="evidence" value="ECO:0007669"/>
    <property type="project" value="UniProtKB-UniRule"/>
</dbReference>
<dbReference type="Gene3D" id="3.30.300.20">
    <property type="match status" value="1"/>
</dbReference>
<dbReference type="HAMAP" id="MF_00003">
    <property type="entry name" value="RbfA"/>
    <property type="match status" value="1"/>
</dbReference>
<dbReference type="InterPro" id="IPR015946">
    <property type="entry name" value="KH_dom-like_a/b"/>
</dbReference>
<dbReference type="InterPro" id="IPR000238">
    <property type="entry name" value="RbfA"/>
</dbReference>
<dbReference type="InterPro" id="IPR023799">
    <property type="entry name" value="RbfA_dom_sf"/>
</dbReference>
<dbReference type="InterPro" id="IPR020053">
    <property type="entry name" value="Ribosome-bd_factorA_CS"/>
</dbReference>
<dbReference type="NCBIfam" id="TIGR00082">
    <property type="entry name" value="rbfA"/>
    <property type="match status" value="1"/>
</dbReference>
<dbReference type="PANTHER" id="PTHR33515">
    <property type="entry name" value="RIBOSOME-BINDING FACTOR A, CHLOROPLASTIC-RELATED"/>
    <property type="match status" value="1"/>
</dbReference>
<dbReference type="PANTHER" id="PTHR33515:SF1">
    <property type="entry name" value="RIBOSOME-BINDING FACTOR A, CHLOROPLASTIC-RELATED"/>
    <property type="match status" value="1"/>
</dbReference>
<dbReference type="Pfam" id="PF02033">
    <property type="entry name" value="RBFA"/>
    <property type="match status" value="1"/>
</dbReference>
<dbReference type="SUPFAM" id="SSF89919">
    <property type="entry name" value="Ribosome-binding factor A, RbfA"/>
    <property type="match status" value="1"/>
</dbReference>
<dbReference type="PROSITE" id="PS01319">
    <property type="entry name" value="RBFA"/>
    <property type="match status" value="1"/>
</dbReference>
<feature type="chain" id="PRO_1000073766" description="Ribosome-binding factor A">
    <location>
        <begin position="1"/>
        <end position="171"/>
    </location>
</feature>
<feature type="region of interest" description="Disordered" evidence="2">
    <location>
        <begin position="120"/>
        <end position="171"/>
    </location>
</feature>
<feature type="compositionally biased region" description="Low complexity" evidence="2">
    <location>
        <begin position="120"/>
        <end position="132"/>
    </location>
</feature>
<feature type="compositionally biased region" description="Basic and acidic residues" evidence="2">
    <location>
        <begin position="133"/>
        <end position="142"/>
    </location>
</feature>
<feature type="compositionally biased region" description="Acidic residues" evidence="2">
    <location>
        <begin position="143"/>
        <end position="160"/>
    </location>
</feature>
<feature type="compositionally biased region" description="Low complexity" evidence="2">
    <location>
        <begin position="161"/>
        <end position="171"/>
    </location>
</feature>
<accession>A6W7Z4</accession>
<gene>
    <name evidence="1" type="primary">rbfA</name>
    <name type="ordered locus">Krad_1445</name>
</gene>
<reference key="1">
    <citation type="journal article" date="2008" name="PLoS ONE">
        <title>Survival in nuclear waste, extreme resistance, and potential applications gleaned from the genome sequence of Kineococcus radiotolerans SRS30216.</title>
        <authorList>
            <person name="Bagwell C.E."/>
            <person name="Bhat S."/>
            <person name="Hawkins G.M."/>
            <person name="Smith B.W."/>
            <person name="Biswas T."/>
            <person name="Hoover T.R."/>
            <person name="Saunders E."/>
            <person name="Han C.S."/>
            <person name="Tsodikov O.V."/>
            <person name="Shimkets L.J."/>
        </authorList>
    </citation>
    <scope>NUCLEOTIDE SEQUENCE [LARGE SCALE GENOMIC DNA]</scope>
    <source>
        <strain>ATCC BAA-149 / DSM 14245 / SRS30216</strain>
    </source>
</reference>
<sequence>MADPTRARKLADRIKVIVADALEKRVKDPRLGFVTITDARVTNDLQHATLFYTVFGSDEEKQGTALALESAKGVLRSEVGKRTGIRLTPTLTFTLDEVPETATQIQDLLKQAAEQDARVAALAAAAQPAGDPDPYKKPVDHTDDWDEDDEDDRDGDDAVDALDAAADVPRL</sequence>
<organism>
    <name type="scientific">Kineococcus radiotolerans (strain ATCC BAA-149 / DSM 14245 / SRS30216)</name>
    <dbReference type="NCBI Taxonomy" id="266940"/>
    <lineage>
        <taxon>Bacteria</taxon>
        <taxon>Bacillati</taxon>
        <taxon>Actinomycetota</taxon>
        <taxon>Actinomycetes</taxon>
        <taxon>Kineosporiales</taxon>
        <taxon>Kineosporiaceae</taxon>
        <taxon>Kineococcus</taxon>
    </lineage>
</organism>